<evidence type="ECO:0000255" key="1">
    <source>
        <dbReference type="HAMAP-Rule" id="MF_00358"/>
    </source>
</evidence>
<evidence type="ECO:0000256" key="2">
    <source>
        <dbReference type="SAM" id="MobiDB-lite"/>
    </source>
</evidence>
<evidence type="ECO:0000305" key="3"/>
<organism>
    <name type="scientific">Lactococcus lactis subsp. cremoris (strain MG1363)</name>
    <dbReference type="NCBI Taxonomy" id="416870"/>
    <lineage>
        <taxon>Bacteria</taxon>
        <taxon>Bacillati</taxon>
        <taxon>Bacillota</taxon>
        <taxon>Bacilli</taxon>
        <taxon>Lactobacillales</taxon>
        <taxon>Streptococcaceae</taxon>
        <taxon>Lactococcus</taxon>
        <taxon>Lactococcus cremoris subsp. cremoris</taxon>
    </lineage>
</organism>
<protein>
    <recommendedName>
        <fullName evidence="1">Small ribosomal subunit protein bS21</fullName>
    </recommendedName>
    <alternativeName>
        <fullName evidence="3">30S ribosomal protein S21</fullName>
    </alternativeName>
</protein>
<sequence>MSKTLVRKNESLDDALRRFKRSVTKAGTLQELRKREHYEKPSVKRKRKSEAARKRKKY</sequence>
<gene>
    <name evidence="1" type="primary">rpsU</name>
    <name type="ordered locus">llmg_0251</name>
</gene>
<dbReference type="EMBL" id="AM406671">
    <property type="protein sequence ID" value="CAL96857.1"/>
    <property type="molecule type" value="Genomic_DNA"/>
</dbReference>
<dbReference type="RefSeq" id="WP_003129844.1">
    <property type="nucleotide sequence ID" value="NZ_WJVF01000001.1"/>
</dbReference>
<dbReference type="PDB" id="5MYJ">
    <property type="method" value="EM"/>
    <property type="resolution" value="5.60 A"/>
    <property type="chains" value="AU=1-58"/>
</dbReference>
<dbReference type="PDBsum" id="5MYJ"/>
<dbReference type="EMDB" id="EMD-3581"/>
<dbReference type="SMR" id="A2RHW9"/>
<dbReference type="STRING" id="416870.llmg_0251"/>
<dbReference type="GeneID" id="89632381"/>
<dbReference type="KEGG" id="llm:llmg_0251"/>
<dbReference type="eggNOG" id="COG0828">
    <property type="taxonomic scope" value="Bacteria"/>
</dbReference>
<dbReference type="HOGENOM" id="CLU_159258_3_2_9"/>
<dbReference type="OrthoDB" id="9799244at2"/>
<dbReference type="PhylomeDB" id="A2RHW9"/>
<dbReference type="Proteomes" id="UP000000364">
    <property type="component" value="Chromosome"/>
</dbReference>
<dbReference type="GO" id="GO:1990904">
    <property type="term" value="C:ribonucleoprotein complex"/>
    <property type="evidence" value="ECO:0007669"/>
    <property type="project" value="UniProtKB-KW"/>
</dbReference>
<dbReference type="GO" id="GO:0005840">
    <property type="term" value="C:ribosome"/>
    <property type="evidence" value="ECO:0007669"/>
    <property type="project" value="UniProtKB-KW"/>
</dbReference>
<dbReference type="GO" id="GO:0003735">
    <property type="term" value="F:structural constituent of ribosome"/>
    <property type="evidence" value="ECO:0007669"/>
    <property type="project" value="InterPro"/>
</dbReference>
<dbReference type="GO" id="GO:0006412">
    <property type="term" value="P:translation"/>
    <property type="evidence" value="ECO:0007669"/>
    <property type="project" value="UniProtKB-UniRule"/>
</dbReference>
<dbReference type="Gene3D" id="1.20.5.1150">
    <property type="entry name" value="Ribosomal protein S8"/>
    <property type="match status" value="1"/>
</dbReference>
<dbReference type="HAMAP" id="MF_00358">
    <property type="entry name" value="Ribosomal_bS21"/>
    <property type="match status" value="1"/>
</dbReference>
<dbReference type="InterPro" id="IPR001911">
    <property type="entry name" value="Ribosomal_bS21"/>
</dbReference>
<dbReference type="InterPro" id="IPR018278">
    <property type="entry name" value="Ribosomal_bS21_CS"/>
</dbReference>
<dbReference type="InterPro" id="IPR038380">
    <property type="entry name" value="Ribosomal_bS21_sf"/>
</dbReference>
<dbReference type="NCBIfam" id="TIGR00030">
    <property type="entry name" value="S21p"/>
    <property type="match status" value="1"/>
</dbReference>
<dbReference type="PANTHER" id="PTHR21109">
    <property type="entry name" value="MITOCHONDRIAL 28S RIBOSOMAL PROTEIN S21"/>
    <property type="match status" value="1"/>
</dbReference>
<dbReference type="PANTHER" id="PTHR21109:SF22">
    <property type="entry name" value="SMALL RIBOSOMAL SUBUNIT PROTEIN BS21"/>
    <property type="match status" value="1"/>
</dbReference>
<dbReference type="Pfam" id="PF01165">
    <property type="entry name" value="Ribosomal_S21"/>
    <property type="match status" value="1"/>
</dbReference>
<dbReference type="PRINTS" id="PR00976">
    <property type="entry name" value="RIBOSOMALS21"/>
</dbReference>
<dbReference type="PROSITE" id="PS01181">
    <property type="entry name" value="RIBOSOMAL_S21"/>
    <property type="match status" value="1"/>
</dbReference>
<accession>A2RHW9</accession>
<feature type="chain" id="PRO_1000005128" description="Small ribosomal subunit protein bS21">
    <location>
        <begin position="1"/>
        <end position="58"/>
    </location>
</feature>
<feature type="region of interest" description="Disordered" evidence="2">
    <location>
        <begin position="27"/>
        <end position="58"/>
    </location>
</feature>
<feature type="compositionally biased region" description="Basic and acidic residues" evidence="2">
    <location>
        <begin position="31"/>
        <end position="42"/>
    </location>
</feature>
<feature type="compositionally biased region" description="Basic residues" evidence="2">
    <location>
        <begin position="43"/>
        <end position="58"/>
    </location>
</feature>
<comment type="similarity">
    <text evidence="1">Belongs to the bacterial ribosomal protein bS21 family.</text>
</comment>
<reference key="1">
    <citation type="journal article" date="2007" name="J. Bacteriol.">
        <title>The complete genome sequence of the lactic acid bacterial paradigm Lactococcus lactis subsp. cremoris MG1363.</title>
        <authorList>
            <person name="Wegmann U."/>
            <person name="O'Connell-Motherway M."/>
            <person name="Zomer A."/>
            <person name="Buist G."/>
            <person name="Shearman C."/>
            <person name="Canchaya C."/>
            <person name="Ventura M."/>
            <person name="Goesmann A."/>
            <person name="Gasson M.J."/>
            <person name="Kuipers O.P."/>
            <person name="van Sinderen D."/>
            <person name="Kok J."/>
        </authorList>
    </citation>
    <scope>NUCLEOTIDE SEQUENCE [LARGE SCALE GENOMIC DNA]</scope>
    <source>
        <strain>MG1363</strain>
    </source>
</reference>
<keyword id="KW-0002">3D-structure</keyword>
<keyword id="KW-0687">Ribonucleoprotein</keyword>
<keyword id="KW-0689">Ribosomal protein</keyword>
<proteinExistence type="evidence at protein level"/>
<name>RS21_LACLM</name>